<gene>
    <name evidence="1" type="primary">murA</name>
    <name type="ordered locus">BT_2005</name>
</gene>
<evidence type="ECO:0000255" key="1">
    <source>
        <dbReference type="HAMAP-Rule" id="MF_00111"/>
    </source>
</evidence>
<comment type="function">
    <text evidence="1">Cell wall formation. Adds enolpyruvyl to UDP-N-acetylglucosamine.</text>
</comment>
<comment type="catalytic activity">
    <reaction evidence="1">
        <text>phosphoenolpyruvate + UDP-N-acetyl-alpha-D-glucosamine = UDP-N-acetyl-3-O-(1-carboxyvinyl)-alpha-D-glucosamine + phosphate</text>
        <dbReference type="Rhea" id="RHEA:18681"/>
        <dbReference type="ChEBI" id="CHEBI:43474"/>
        <dbReference type="ChEBI" id="CHEBI:57705"/>
        <dbReference type="ChEBI" id="CHEBI:58702"/>
        <dbReference type="ChEBI" id="CHEBI:68483"/>
        <dbReference type="EC" id="2.5.1.7"/>
    </reaction>
</comment>
<comment type="pathway">
    <text evidence="1">Cell wall biogenesis; peptidoglycan biosynthesis.</text>
</comment>
<comment type="subcellular location">
    <subcellularLocation>
        <location evidence="1">Cytoplasm</location>
    </subcellularLocation>
</comment>
<comment type="similarity">
    <text evidence="1">Belongs to the EPSP synthase family. MurA subfamily.</text>
</comment>
<organism>
    <name type="scientific">Bacteroides thetaiotaomicron (strain ATCC 29148 / DSM 2079 / JCM 5827 / CCUG 10774 / NCTC 10582 / VPI-5482 / E50)</name>
    <dbReference type="NCBI Taxonomy" id="226186"/>
    <lineage>
        <taxon>Bacteria</taxon>
        <taxon>Pseudomonadati</taxon>
        <taxon>Bacteroidota</taxon>
        <taxon>Bacteroidia</taxon>
        <taxon>Bacteroidales</taxon>
        <taxon>Bacteroidaceae</taxon>
        <taxon>Bacteroides</taxon>
    </lineage>
</organism>
<keyword id="KW-0131">Cell cycle</keyword>
<keyword id="KW-0132">Cell division</keyword>
<keyword id="KW-0133">Cell shape</keyword>
<keyword id="KW-0961">Cell wall biogenesis/degradation</keyword>
<keyword id="KW-0963">Cytoplasm</keyword>
<keyword id="KW-0573">Peptidoglycan synthesis</keyword>
<keyword id="KW-1185">Reference proteome</keyword>
<keyword id="KW-0808">Transferase</keyword>
<sequence length="434" mass="47416">MASFVIEGGHRLSGEIHPQGAKNEVLQIICATLLTAEEVTVNNIPDILDVNNLIQLMREMGVTVAKEGIDTYSFKAENVDLAYLESDKFLKKCSSLRGSVMLIGPMVARFGKALISKPGGDKIGRRRLDTHFVGIQNLGADFRYDESRGIYEITADRLQGSYMLLDEASVTGTANILMAAVLAKGTTTIYNAACEPYLQQLCRMLNRMGAKISGIASNLLTIEGVEELHGTQHTVLPDMIEVGSFIGMAAMTKSEITIKNVSYENLGIIPESFRRLGIKLEQRGDDIYVPAQETYEIESFIDGSIMTIADAPWPGLTPDLLSVMLVVATQAKGSVLIHQKMFESRLFFVDKLIDMGAQIILCDPHRAVVIGHNHGFKLRGARLTSPDIRAGIALLIAAMSAEGTSTISNIEQIDRGYQNIEGRLNAIGARITRI</sequence>
<accession>Q8A681</accession>
<protein>
    <recommendedName>
        <fullName evidence="1">UDP-N-acetylglucosamine 1-carboxyvinyltransferase</fullName>
        <ecNumber evidence="1">2.5.1.7</ecNumber>
    </recommendedName>
    <alternativeName>
        <fullName evidence="1">Enoylpyruvate transferase</fullName>
    </alternativeName>
    <alternativeName>
        <fullName evidence="1">UDP-N-acetylglucosamine enolpyruvyl transferase</fullName>
        <shortName evidence="1">EPT</shortName>
    </alternativeName>
</protein>
<name>MURA_BACTN</name>
<reference key="1">
    <citation type="journal article" date="2003" name="Science">
        <title>A genomic view of the human-Bacteroides thetaiotaomicron symbiosis.</title>
        <authorList>
            <person name="Xu J."/>
            <person name="Bjursell M.K."/>
            <person name="Himrod J."/>
            <person name="Deng S."/>
            <person name="Carmichael L.K."/>
            <person name="Chiang H.C."/>
            <person name="Hooper L.V."/>
            <person name="Gordon J.I."/>
        </authorList>
    </citation>
    <scope>NUCLEOTIDE SEQUENCE [LARGE SCALE GENOMIC DNA]</scope>
    <source>
        <strain>ATCC 29148 / DSM 2079 / JCM 5827 / CCUG 10774 / NCTC 10582 / VPI-5482 / E50</strain>
    </source>
</reference>
<dbReference type="EC" id="2.5.1.7" evidence="1"/>
<dbReference type="EMBL" id="AE015928">
    <property type="protein sequence ID" value="AAO77112.1"/>
    <property type="molecule type" value="Genomic_DNA"/>
</dbReference>
<dbReference type="RefSeq" id="NP_810918.1">
    <property type="nucleotide sequence ID" value="NC_004663.1"/>
</dbReference>
<dbReference type="RefSeq" id="WP_011108085.1">
    <property type="nucleotide sequence ID" value="NC_004663.1"/>
</dbReference>
<dbReference type="SMR" id="Q8A681"/>
<dbReference type="FunCoup" id="Q8A681">
    <property type="interactions" value="432"/>
</dbReference>
<dbReference type="STRING" id="226186.BT_2005"/>
<dbReference type="PaxDb" id="226186-BT_2005"/>
<dbReference type="EnsemblBacteria" id="AAO77112">
    <property type="protein sequence ID" value="AAO77112"/>
    <property type="gene ID" value="BT_2005"/>
</dbReference>
<dbReference type="GeneID" id="60927990"/>
<dbReference type="KEGG" id="bth:BT_2005"/>
<dbReference type="PATRIC" id="fig|226186.12.peg.2057"/>
<dbReference type="eggNOG" id="COG0766">
    <property type="taxonomic scope" value="Bacteria"/>
</dbReference>
<dbReference type="HOGENOM" id="CLU_027387_0_1_10"/>
<dbReference type="InParanoid" id="Q8A681"/>
<dbReference type="OrthoDB" id="9803760at2"/>
<dbReference type="UniPathway" id="UPA00219"/>
<dbReference type="Proteomes" id="UP000001414">
    <property type="component" value="Chromosome"/>
</dbReference>
<dbReference type="GO" id="GO:0005737">
    <property type="term" value="C:cytoplasm"/>
    <property type="evidence" value="ECO:0007669"/>
    <property type="project" value="UniProtKB-SubCell"/>
</dbReference>
<dbReference type="GO" id="GO:0008760">
    <property type="term" value="F:UDP-N-acetylglucosamine 1-carboxyvinyltransferase activity"/>
    <property type="evidence" value="ECO:0007669"/>
    <property type="project" value="UniProtKB-UniRule"/>
</dbReference>
<dbReference type="GO" id="GO:0051301">
    <property type="term" value="P:cell division"/>
    <property type="evidence" value="ECO:0007669"/>
    <property type="project" value="UniProtKB-KW"/>
</dbReference>
<dbReference type="GO" id="GO:0071555">
    <property type="term" value="P:cell wall organization"/>
    <property type="evidence" value="ECO:0007669"/>
    <property type="project" value="UniProtKB-KW"/>
</dbReference>
<dbReference type="GO" id="GO:0009252">
    <property type="term" value="P:peptidoglycan biosynthetic process"/>
    <property type="evidence" value="ECO:0007669"/>
    <property type="project" value="UniProtKB-UniRule"/>
</dbReference>
<dbReference type="GO" id="GO:0008360">
    <property type="term" value="P:regulation of cell shape"/>
    <property type="evidence" value="ECO:0007669"/>
    <property type="project" value="UniProtKB-KW"/>
</dbReference>
<dbReference type="GO" id="GO:0019277">
    <property type="term" value="P:UDP-N-acetylgalactosamine biosynthetic process"/>
    <property type="evidence" value="ECO:0007669"/>
    <property type="project" value="InterPro"/>
</dbReference>
<dbReference type="CDD" id="cd01555">
    <property type="entry name" value="UdpNAET"/>
    <property type="match status" value="1"/>
</dbReference>
<dbReference type="Gene3D" id="3.65.10.10">
    <property type="entry name" value="Enolpyruvate transferase domain"/>
    <property type="match status" value="2"/>
</dbReference>
<dbReference type="HAMAP" id="MF_00111">
    <property type="entry name" value="MurA"/>
    <property type="match status" value="1"/>
</dbReference>
<dbReference type="InterPro" id="IPR001986">
    <property type="entry name" value="Enolpyruvate_Tfrase_dom"/>
</dbReference>
<dbReference type="InterPro" id="IPR036968">
    <property type="entry name" value="Enolpyruvate_Tfrase_sf"/>
</dbReference>
<dbReference type="InterPro" id="IPR050068">
    <property type="entry name" value="MurA_subfamily"/>
</dbReference>
<dbReference type="InterPro" id="IPR013792">
    <property type="entry name" value="RNA3'P_cycl/enolpyr_Trfase_a/b"/>
</dbReference>
<dbReference type="InterPro" id="IPR005750">
    <property type="entry name" value="UDP_GlcNAc_COvinyl_MurA"/>
</dbReference>
<dbReference type="NCBIfam" id="TIGR01072">
    <property type="entry name" value="murA"/>
    <property type="match status" value="1"/>
</dbReference>
<dbReference type="NCBIfam" id="NF006873">
    <property type="entry name" value="PRK09369.1"/>
    <property type="match status" value="1"/>
</dbReference>
<dbReference type="PANTHER" id="PTHR43783">
    <property type="entry name" value="UDP-N-ACETYLGLUCOSAMINE 1-CARBOXYVINYLTRANSFERASE"/>
    <property type="match status" value="1"/>
</dbReference>
<dbReference type="PANTHER" id="PTHR43783:SF1">
    <property type="entry name" value="UDP-N-ACETYLGLUCOSAMINE 1-CARBOXYVINYLTRANSFERASE"/>
    <property type="match status" value="1"/>
</dbReference>
<dbReference type="Pfam" id="PF00275">
    <property type="entry name" value="EPSP_synthase"/>
    <property type="match status" value="1"/>
</dbReference>
<dbReference type="SUPFAM" id="SSF55205">
    <property type="entry name" value="EPT/RTPC-like"/>
    <property type="match status" value="1"/>
</dbReference>
<feature type="chain" id="PRO_0000231168" description="UDP-N-acetylglucosamine 1-carboxyvinyltransferase">
    <location>
        <begin position="1"/>
        <end position="434"/>
    </location>
</feature>
<feature type="active site" description="Proton donor" evidence="1">
    <location>
        <position position="121"/>
    </location>
</feature>
<feature type="binding site" evidence="1">
    <location>
        <begin position="22"/>
        <end position="23"/>
    </location>
    <ligand>
        <name>phosphoenolpyruvate</name>
        <dbReference type="ChEBI" id="CHEBI:58702"/>
    </ligand>
</feature>
<feature type="binding site" evidence="1">
    <location>
        <position position="97"/>
    </location>
    <ligand>
        <name>UDP-N-acetyl-alpha-D-glucosamine</name>
        <dbReference type="ChEBI" id="CHEBI:57705"/>
    </ligand>
</feature>
<feature type="binding site" evidence="1">
    <location>
        <position position="319"/>
    </location>
    <ligand>
        <name>UDP-N-acetyl-alpha-D-glucosamine</name>
        <dbReference type="ChEBI" id="CHEBI:57705"/>
    </ligand>
</feature>
<feature type="binding site" evidence="1">
    <location>
        <position position="341"/>
    </location>
    <ligand>
        <name>UDP-N-acetyl-alpha-D-glucosamine</name>
        <dbReference type="ChEBI" id="CHEBI:57705"/>
    </ligand>
</feature>
<proteinExistence type="inferred from homology"/>